<reference key="1">
    <citation type="submission" date="2007-11" db="EMBL/GenBank/DDBJ databases">
        <authorList>
            <consortium name="The Salmonella enterica serovar Arizonae Genome Sequencing Project"/>
            <person name="McClelland M."/>
            <person name="Sanderson E.K."/>
            <person name="Porwollik S."/>
            <person name="Spieth J."/>
            <person name="Clifton W.S."/>
            <person name="Fulton R."/>
            <person name="Chunyan W."/>
            <person name="Wollam A."/>
            <person name="Shah N."/>
            <person name="Pepin K."/>
            <person name="Bhonagiri V."/>
            <person name="Nash W."/>
            <person name="Johnson M."/>
            <person name="Thiruvilangam P."/>
            <person name="Wilson R."/>
        </authorList>
    </citation>
    <scope>NUCLEOTIDE SEQUENCE [LARGE SCALE GENOMIC DNA]</scope>
    <source>
        <strain>ATCC BAA-731 / CDC346-86 / RSK2980</strain>
    </source>
</reference>
<dbReference type="EC" id="2.2.1.7" evidence="1"/>
<dbReference type="EMBL" id="CP000880">
    <property type="protein sequence ID" value="ABX22364.1"/>
    <property type="molecule type" value="Genomic_DNA"/>
</dbReference>
<dbReference type="SMR" id="A9MM42"/>
<dbReference type="STRING" id="41514.SARI_02505"/>
<dbReference type="KEGG" id="ses:SARI_02505"/>
<dbReference type="HOGENOM" id="CLU_009227_1_4_6"/>
<dbReference type="UniPathway" id="UPA00064">
    <property type="reaction ID" value="UER00091"/>
</dbReference>
<dbReference type="Proteomes" id="UP000002084">
    <property type="component" value="Chromosome"/>
</dbReference>
<dbReference type="GO" id="GO:0005829">
    <property type="term" value="C:cytosol"/>
    <property type="evidence" value="ECO:0007669"/>
    <property type="project" value="TreeGrafter"/>
</dbReference>
<dbReference type="GO" id="GO:0008661">
    <property type="term" value="F:1-deoxy-D-xylulose-5-phosphate synthase activity"/>
    <property type="evidence" value="ECO:0007669"/>
    <property type="project" value="UniProtKB-UniRule"/>
</dbReference>
<dbReference type="GO" id="GO:0000287">
    <property type="term" value="F:magnesium ion binding"/>
    <property type="evidence" value="ECO:0007669"/>
    <property type="project" value="UniProtKB-UniRule"/>
</dbReference>
<dbReference type="GO" id="GO:0030976">
    <property type="term" value="F:thiamine pyrophosphate binding"/>
    <property type="evidence" value="ECO:0007669"/>
    <property type="project" value="UniProtKB-UniRule"/>
</dbReference>
<dbReference type="GO" id="GO:0052865">
    <property type="term" value="P:1-deoxy-D-xylulose 5-phosphate biosynthetic process"/>
    <property type="evidence" value="ECO:0007669"/>
    <property type="project" value="UniProtKB-UniPathway"/>
</dbReference>
<dbReference type="GO" id="GO:0019288">
    <property type="term" value="P:isopentenyl diphosphate biosynthetic process, methylerythritol 4-phosphate pathway"/>
    <property type="evidence" value="ECO:0007669"/>
    <property type="project" value="TreeGrafter"/>
</dbReference>
<dbReference type="GO" id="GO:0016114">
    <property type="term" value="P:terpenoid biosynthetic process"/>
    <property type="evidence" value="ECO:0007669"/>
    <property type="project" value="UniProtKB-UniRule"/>
</dbReference>
<dbReference type="GO" id="GO:0009228">
    <property type="term" value="P:thiamine biosynthetic process"/>
    <property type="evidence" value="ECO:0007669"/>
    <property type="project" value="UniProtKB-UniRule"/>
</dbReference>
<dbReference type="CDD" id="cd02007">
    <property type="entry name" value="TPP_DXS"/>
    <property type="match status" value="1"/>
</dbReference>
<dbReference type="CDD" id="cd07033">
    <property type="entry name" value="TPP_PYR_DXS_TK_like"/>
    <property type="match status" value="1"/>
</dbReference>
<dbReference type="FunFam" id="3.40.50.920:FF:000002">
    <property type="entry name" value="1-deoxy-D-xylulose-5-phosphate synthase"/>
    <property type="match status" value="1"/>
</dbReference>
<dbReference type="FunFam" id="3.40.50.970:FF:000005">
    <property type="entry name" value="1-deoxy-D-xylulose-5-phosphate synthase"/>
    <property type="match status" value="1"/>
</dbReference>
<dbReference type="Gene3D" id="3.40.50.920">
    <property type="match status" value="1"/>
</dbReference>
<dbReference type="Gene3D" id="3.40.50.970">
    <property type="match status" value="2"/>
</dbReference>
<dbReference type="HAMAP" id="MF_00315">
    <property type="entry name" value="DXP_synth"/>
    <property type="match status" value="1"/>
</dbReference>
<dbReference type="InterPro" id="IPR005477">
    <property type="entry name" value="Dxylulose-5-P_synthase"/>
</dbReference>
<dbReference type="InterPro" id="IPR029061">
    <property type="entry name" value="THDP-binding"/>
</dbReference>
<dbReference type="InterPro" id="IPR009014">
    <property type="entry name" value="Transketo_C/PFOR_II"/>
</dbReference>
<dbReference type="InterPro" id="IPR005475">
    <property type="entry name" value="Transketolase-like_Pyr-bd"/>
</dbReference>
<dbReference type="InterPro" id="IPR020826">
    <property type="entry name" value="Transketolase_BS"/>
</dbReference>
<dbReference type="InterPro" id="IPR033248">
    <property type="entry name" value="Transketolase_C"/>
</dbReference>
<dbReference type="InterPro" id="IPR049557">
    <property type="entry name" value="Transketolase_CS"/>
</dbReference>
<dbReference type="NCBIfam" id="TIGR00204">
    <property type="entry name" value="dxs"/>
    <property type="match status" value="1"/>
</dbReference>
<dbReference type="NCBIfam" id="NF003933">
    <property type="entry name" value="PRK05444.2-2"/>
    <property type="match status" value="1"/>
</dbReference>
<dbReference type="PANTHER" id="PTHR43322">
    <property type="entry name" value="1-D-DEOXYXYLULOSE 5-PHOSPHATE SYNTHASE-RELATED"/>
    <property type="match status" value="1"/>
</dbReference>
<dbReference type="PANTHER" id="PTHR43322:SF5">
    <property type="entry name" value="1-DEOXY-D-XYLULOSE-5-PHOSPHATE SYNTHASE, CHLOROPLASTIC"/>
    <property type="match status" value="1"/>
</dbReference>
<dbReference type="Pfam" id="PF13292">
    <property type="entry name" value="DXP_synthase_N"/>
    <property type="match status" value="1"/>
</dbReference>
<dbReference type="Pfam" id="PF02779">
    <property type="entry name" value="Transket_pyr"/>
    <property type="match status" value="1"/>
</dbReference>
<dbReference type="Pfam" id="PF02780">
    <property type="entry name" value="Transketolase_C"/>
    <property type="match status" value="1"/>
</dbReference>
<dbReference type="SMART" id="SM00861">
    <property type="entry name" value="Transket_pyr"/>
    <property type="match status" value="1"/>
</dbReference>
<dbReference type="SUPFAM" id="SSF52518">
    <property type="entry name" value="Thiamin diphosphate-binding fold (THDP-binding)"/>
    <property type="match status" value="2"/>
</dbReference>
<dbReference type="SUPFAM" id="SSF52922">
    <property type="entry name" value="TK C-terminal domain-like"/>
    <property type="match status" value="1"/>
</dbReference>
<dbReference type="PROSITE" id="PS00801">
    <property type="entry name" value="TRANSKETOLASE_1"/>
    <property type="match status" value="1"/>
</dbReference>
<dbReference type="PROSITE" id="PS00802">
    <property type="entry name" value="TRANSKETOLASE_2"/>
    <property type="match status" value="1"/>
</dbReference>
<accession>A9MM42</accession>
<name>DXS_SALAR</name>
<gene>
    <name evidence="1" type="primary">dxs</name>
    <name type="ordered locus">SARI_02505</name>
</gene>
<organism>
    <name type="scientific">Salmonella arizonae (strain ATCC BAA-731 / CDC346-86 / RSK2980)</name>
    <dbReference type="NCBI Taxonomy" id="41514"/>
    <lineage>
        <taxon>Bacteria</taxon>
        <taxon>Pseudomonadati</taxon>
        <taxon>Pseudomonadota</taxon>
        <taxon>Gammaproteobacteria</taxon>
        <taxon>Enterobacterales</taxon>
        <taxon>Enterobacteriaceae</taxon>
        <taxon>Salmonella</taxon>
    </lineage>
</organism>
<comment type="function">
    <text evidence="1">Catalyzes the acyloin condensation reaction between C atoms 2 and 3 of pyruvate and glyceraldehyde 3-phosphate to yield 1-deoxy-D-xylulose-5-phosphate (DXP).</text>
</comment>
<comment type="catalytic activity">
    <reaction evidence="1">
        <text>D-glyceraldehyde 3-phosphate + pyruvate + H(+) = 1-deoxy-D-xylulose 5-phosphate + CO2</text>
        <dbReference type="Rhea" id="RHEA:12605"/>
        <dbReference type="ChEBI" id="CHEBI:15361"/>
        <dbReference type="ChEBI" id="CHEBI:15378"/>
        <dbReference type="ChEBI" id="CHEBI:16526"/>
        <dbReference type="ChEBI" id="CHEBI:57792"/>
        <dbReference type="ChEBI" id="CHEBI:59776"/>
        <dbReference type="EC" id="2.2.1.7"/>
    </reaction>
</comment>
<comment type="cofactor">
    <cofactor evidence="1">
        <name>Mg(2+)</name>
        <dbReference type="ChEBI" id="CHEBI:18420"/>
    </cofactor>
    <text evidence="1">Binds 1 Mg(2+) ion per subunit.</text>
</comment>
<comment type="cofactor">
    <cofactor evidence="1">
        <name>thiamine diphosphate</name>
        <dbReference type="ChEBI" id="CHEBI:58937"/>
    </cofactor>
    <text evidence="1">Binds 1 thiamine pyrophosphate per subunit.</text>
</comment>
<comment type="pathway">
    <text evidence="1">Metabolic intermediate biosynthesis; 1-deoxy-D-xylulose 5-phosphate biosynthesis; 1-deoxy-D-xylulose 5-phosphate from D-glyceraldehyde 3-phosphate and pyruvate: step 1/1.</text>
</comment>
<comment type="subunit">
    <text evidence="1">Homodimer.</text>
</comment>
<comment type="similarity">
    <text evidence="1">Belongs to the transketolase family. DXPS subfamily.</text>
</comment>
<feature type="chain" id="PRO_1000079100" description="1-deoxy-D-xylulose-5-phosphate synthase">
    <location>
        <begin position="1"/>
        <end position="620"/>
    </location>
</feature>
<feature type="binding site" evidence="1">
    <location>
        <position position="80"/>
    </location>
    <ligand>
        <name>thiamine diphosphate</name>
        <dbReference type="ChEBI" id="CHEBI:58937"/>
    </ligand>
</feature>
<feature type="binding site" evidence="1">
    <location>
        <begin position="121"/>
        <end position="123"/>
    </location>
    <ligand>
        <name>thiamine diphosphate</name>
        <dbReference type="ChEBI" id="CHEBI:58937"/>
    </ligand>
</feature>
<feature type="binding site" evidence="1">
    <location>
        <position position="152"/>
    </location>
    <ligand>
        <name>Mg(2+)</name>
        <dbReference type="ChEBI" id="CHEBI:18420"/>
    </ligand>
</feature>
<feature type="binding site" evidence="1">
    <location>
        <begin position="153"/>
        <end position="154"/>
    </location>
    <ligand>
        <name>thiamine diphosphate</name>
        <dbReference type="ChEBI" id="CHEBI:58937"/>
    </ligand>
</feature>
<feature type="binding site" evidence="1">
    <location>
        <position position="181"/>
    </location>
    <ligand>
        <name>Mg(2+)</name>
        <dbReference type="ChEBI" id="CHEBI:18420"/>
    </ligand>
</feature>
<feature type="binding site" evidence="1">
    <location>
        <position position="181"/>
    </location>
    <ligand>
        <name>thiamine diphosphate</name>
        <dbReference type="ChEBI" id="CHEBI:58937"/>
    </ligand>
</feature>
<feature type="binding site" evidence="1">
    <location>
        <position position="288"/>
    </location>
    <ligand>
        <name>thiamine diphosphate</name>
        <dbReference type="ChEBI" id="CHEBI:58937"/>
    </ligand>
</feature>
<feature type="binding site" evidence="1">
    <location>
        <position position="370"/>
    </location>
    <ligand>
        <name>thiamine diphosphate</name>
        <dbReference type="ChEBI" id="CHEBI:58937"/>
    </ligand>
</feature>
<sequence>MSFDIAKYPTLALVDSTQELRLLPKESLPKLCDELRRYLLDSVSRSSGHFASGLGTVELTVALHYVYNTPFDQLIWDVGHQAYPHKILTGRRDKIGTIRQKGGLHPFPWRGESEYDVLSVGHSSTSISAGIGIAVAAEKEGKDRRTVCVIGDGAITAGMAFEAMNHAGDIRPDMLVILNDNEMSISENVGALNNHLAQLLSGKLYSSLREGGKKVFSGVPPIKELLKRTEEHIKGMVVPGTLFEELGFNYIGPVDGHDVMGLISTLKNMRDLKGPQFLHIMTKKGRGYEPAEKDPITFHAVPKFDPSSGCLPKSSGSLPGYSKIFGDWLCETAAKDSKLMAITPAMREGSGMVEFSRKFPDRYFDVAIAEQHAVTFAAGLAIGGYKPVVAIYSTFLQRAYDQVIHDIAIQKLPVMFAIDRAGIVGADGQTHQGAFDLSYLRCIPDMVIMTPSDENECRQMLFTGYHYNDGPTAVRYPRGNAQGVALTPLEKLPIGKGIVKRHGEKLAILNFGTLMPEAAKVAEALNATLVDMRFVKPLDETLILEMAARHEALATLEENAIMGGAGSGVNEVLMAHRKPVPVLNIGLPDFFIPQGTQEEARAELGLDAAGIEAKIKAWLA</sequence>
<evidence type="ECO:0000255" key="1">
    <source>
        <dbReference type="HAMAP-Rule" id="MF_00315"/>
    </source>
</evidence>
<keyword id="KW-0414">Isoprene biosynthesis</keyword>
<keyword id="KW-0460">Magnesium</keyword>
<keyword id="KW-0479">Metal-binding</keyword>
<keyword id="KW-1185">Reference proteome</keyword>
<keyword id="KW-0784">Thiamine biosynthesis</keyword>
<keyword id="KW-0786">Thiamine pyrophosphate</keyword>
<keyword id="KW-0808">Transferase</keyword>
<proteinExistence type="inferred from homology"/>
<protein>
    <recommendedName>
        <fullName evidence="1">1-deoxy-D-xylulose-5-phosphate synthase</fullName>
        <ecNumber evidence="1">2.2.1.7</ecNumber>
    </recommendedName>
    <alternativeName>
        <fullName evidence="1">1-deoxyxylulose-5-phosphate synthase</fullName>
        <shortName evidence="1">DXP synthase</shortName>
        <shortName evidence="1">DXPS</shortName>
    </alternativeName>
</protein>